<accession>Q9Y0X9</accession>
<feature type="signal peptide" evidence="2">
    <location>
        <begin position="1"/>
        <end position="23"/>
    </location>
</feature>
<feature type="chain" id="PRO_0000004818" description="Cecropin-C">
    <location>
        <begin position="24"/>
        <end position="58"/>
    </location>
</feature>
<organism>
    <name type="scientific">Aedes albopictus</name>
    <name type="common">Asian tiger mosquito</name>
    <name type="synonym">Stegomyia albopicta</name>
    <dbReference type="NCBI Taxonomy" id="7160"/>
    <lineage>
        <taxon>Eukaryota</taxon>
        <taxon>Metazoa</taxon>
        <taxon>Ecdysozoa</taxon>
        <taxon>Arthropoda</taxon>
        <taxon>Hexapoda</taxon>
        <taxon>Insecta</taxon>
        <taxon>Pterygota</taxon>
        <taxon>Neoptera</taxon>
        <taxon>Endopterygota</taxon>
        <taxon>Diptera</taxon>
        <taxon>Nematocera</taxon>
        <taxon>Culicoidea</taxon>
        <taxon>Culicidae</taxon>
        <taxon>Culicinae</taxon>
        <taxon>Aedini</taxon>
        <taxon>Aedes</taxon>
        <taxon>Stegomyia</taxon>
    </lineage>
</organism>
<proteinExistence type="evidence at protein level"/>
<comment type="function">
    <text evidence="1">Cecropins have lytic and antibacterial activity against several Gram-positive and Gram-negative bacteria.</text>
</comment>
<comment type="subcellular location">
    <subcellularLocation>
        <location>Secreted</location>
    </subcellularLocation>
</comment>
<comment type="developmental stage">
    <text evidence="2">Expressed within 4 hours after induction and continued to accumulate over 24 hours.</text>
</comment>
<comment type="induction">
    <text>By bacterial infection.</text>
</comment>
<comment type="mass spectrometry"/>
<comment type="similarity">
    <text evidence="3">Belongs to the cecropin family.</text>
</comment>
<name>CECC1_AEDAL</name>
<dbReference type="EMBL" id="AF145804">
    <property type="protein sequence ID" value="AAD37703.1"/>
    <property type="molecule type" value="mRNA"/>
</dbReference>
<dbReference type="EMBL" id="AF394747">
    <property type="protein sequence ID" value="AAK81854.1"/>
    <property type="molecule type" value="Genomic_DNA"/>
</dbReference>
<dbReference type="SMR" id="Q9Y0X9"/>
<dbReference type="Proteomes" id="UP000069940">
    <property type="component" value="Unassembled WGS sequence"/>
</dbReference>
<dbReference type="GO" id="GO:0005615">
    <property type="term" value="C:extracellular space"/>
    <property type="evidence" value="ECO:0007669"/>
    <property type="project" value="TreeGrafter"/>
</dbReference>
<dbReference type="GO" id="GO:0019731">
    <property type="term" value="P:antibacterial humoral response"/>
    <property type="evidence" value="ECO:0007669"/>
    <property type="project" value="InterPro"/>
</dbReference>
<dbReference type="GO" id="GO:0050829">
    <property type="term" value="P:defense response to Gram-negative bacterium"/>
    <property type="evidence" value="ECO:0007669"/>
    <property type="project" value="UniProtKB-ARBA"/>
</dbReference>
<dbReference type="GO" id="GO:0050830">
    <property type="term" value="P:defense response to Gram-positive bacterium"/>
    <property type="evidence" value="ECO:0007669"/>
    <property type="project" value="TreeGrafter"/>
</dbReference>
<dbReference type="GO" id="GO:0045087">
    <property type="term" value="P:innate immune response"/>
    <property type="evidence" value="ECO:0007669"/>
    <property type="project" value="UniProtKB-KW"/>
</dbReference>
<dbReference type="InterPro" id="IPR000875">
    <property type="entry name" value="Cecropin"/>
</dbReference>
<dbReference type="InterPro" id="IPR020400">
    <property type="entry name" value="Cecropin_insect"/>
</dbReference>
<dbReference type="PANTHER" id="PTHR38329">
    <property type="entry name" value="CECROPIN-A1-RELATED"/>
    <property type="match status" value="1"/>
</dbReference>
<dbReference type="PANTHER" id="PTHR38329:SF1">
    <property type="entry name" value="CECROPIN-A1-RELATED"/>
    <property type="match status" value="1"/>
</dbReference>
<dbReference type="Pfam" id="PF00272">
    <property type="entry name" value="Cecropin"/>
    <property type="match status" value="1"/>
</dbReference>
<sequence>MNFTKIFVLIAMAALLLVGQSEAGGLKKLGKKLEGAGKRVFNAAEKALPVVAGAKALGK</sequence>
<evidence type="ECO:0000250" key="1"/>
<evidence type="ECO:0000269" key="2">
    <source>
    </source>
</evidence>
<evidence type="ECO:0000305" key="3"/>
<reference key="1">
    <citation type="journal article" date="1999" name="FEBS Lett.">
        <title>Cloning and expression of three cecropin cDNAs from a mosquito cell line.</title>
        <authorList>
            <person name="Sun D."/>
            <person name="Eccleston E.D."/>
            <person name="Fallon A.M."/>
        </authorList>
    </citation>
    <scope>NUCLEOTIDE SEQUENCE [MRNA]</scope>
    <scope>PROTEIN SEQUENCE OF 24-58</scope>
    <scope>DEVELOPMENTAL STAGE</scope>
    <scope>MASS SPECTROMETRY</scope>
</reference>
<reference key="2">
    <citation type="submission" date="2001-06" db="EMBL/GenBank/DDBJ databases">
        <title>Characterization of genomic DNA encoding mosquito cecropins.</title>
        <authorList>
            <person name="Sun D."/>
            <person name="Fallon A.M."/>
        </authorList>
    </citation>
    <scope>NUCLEOTIDE SEQUENCE [GENOMIC DNA]</scope>
</reference>
<keyword id="KW-0044">Antibiotic</keyword>
<keyword id="KW-0929">Antimicrobial</keyword>
<keyword id="KW-0903">Direct protein sequencing</keyword>
<keyword id="KW-0391">Immunity</keyword>
<keyword id="KW-0399">Innate immunity</keyword>
<keyword id="KW-0964">Secreted</keyword>
<keyword id="KW-0732">Signal</keyword>
<gene>
    <name type="primary">CECC1</name>
    <name type="synonym">CECC</name>
</gene>
<protein>
    <recommendedName>
        <fullName>Cecropin-C type 1</fullName>
        <shortName>Cecropin-C1</shortName>
    </recommendedName>
    <component>
        <recommendedName>
            <fullName>Cecropin-C</fullName>
        </recommendedName>
        <alternativeName>
            <fullName>AalCecC</fullName>
        </alternativeName>
    </component>
</protein>